<protein>
    <recommendedName>
        <fullName evidence="1">L-alanine exporter AlaE</fullName>
    </recommendedName>
</protein>
<comment type="function">
    <text evidence="1">Exports L-alanine.</text>
</comment>
<comment type="subcellular location">
    <subcellularLocation>
        <location evidence="1">Cell inner membrane</location>
        <topology evidence="1">Multi-pass membrane protein</topology>
    </subcellularLocation>
</comment>
<comment type="similarity">
    <text evidence="1">Belongs to the AlaE exporter family.</text>
</comment>
<comment type="sequence caution" evidence="2">
    <conflict type="erroneous initiation">
        <sequence resource="EMBL-CDS" id="CAQ79594"/>
    </conflict>
    <text>Truncated N-terminus.</text>
</comment>
<feature type="chain" id="PRO_0000415618" description="L-alanine exporter AlaE">
    <location>
        <begin position="1"/>
        <end position="149"/>
    </location>
</feature>
<feature type="transmembrane region" description="Helical" evidence="1">
    <location>
        <begin position="17"/>
        <end position="37"/>
    </location>
</feature>
<feature type="transmembrane region" description="Helical" evidence="1">
    <location>
        <begin position="43"/>
        <end position="63"/>
    </location>
</feature>
<feature type="transmembrane region" description="Helical" evidence="1">
    <location>
        <begin position="86"/>
        <end position="106"/>
    </location>
</feature>
<feature type="transmembrane region" description="Helical" evidence="1">
    <location>
        <begin position="111"/>
        <end position="131"/>
    </location>
</feature>
<keyword id="KW-0029">Amino-acid transport</keyword>
<keyword id="KW-0997">Cell inner membrane</keyword>
<keyword id="KW-1003">Cell membrane</keyword>
<keyword id="KW-0472">Membrane</keyword>
<keyword id="KW-0812">Transmembrane</keyword>
<keyword id="KW-1133">Transmembrane helix</keyword>
<keyword id="KW-0813">Transport</keyword>
<gene>
    <name evidence="1" type="primary">alaE</name>
    <name type="ordered locus">VSAL_I1909</name>
</gene>
<dbReference type="EMBL" id="FM178379">
    <property type="protein sequence ID" value="CAQ79594.1"/>
    <property type="status" value="ALT_INIT"/>
    <property type="molecule type" value="Genomic_DNA"/>
</dbReference>
<dbReference type="RefSeq" id="WP_044583286.1">
    <property type="nucleotide sequence ID" value="NC_011312.1"/>
</dbReference>
<dbReference type="KEGG" id="vsa:VSAL_I1909"/>
<dbReference type="eggNOG" id="ENOG502ZRFS">
    <property type="taxonomic scope" value="Bacteria"/>
</dbReference>
<dbReference type="HOGENOM" id="CLU_126493_0_0_6"/>
<dbReference type="Proteomes" id="UP000001730">
    <property type="component" value="Chromosome 1"/>
</dbReference>
<dbReference type="GO" id="GO:0005886">
    <property type="term" value="C:plasma membrane"/>
    <property type="evidence" value="ECO:0007669"/>
    <property type="project" value="UniProtKB-SubCell"/>
</dbReference>
<dbReference type="GO" id="GO:0034639">
    <property type="term" value="F:L-amino acid efflux transmembrane transporter activity"/>
    <property type="evidence" value="ECO:0007669"/>
    <property type="project" value="UniProtKB-UniRule"/>
</dbReference>
<dbReference type="GO" id="GO:0032973">
    <property type="term" value="P:amino acid export across plasma membrane"/>
    <property type="evidence" value="ECO:0007669"/>
    <property type="project" value="UniProtKB-UniRule"/>
</dbReference>
<dbReference type="HAMAP" id="MF_00914">
    <property type="entry name" value="L_Ala_exporter"/>
    <property type="match status" value="1"/>
</dbReference>
<dbReference type="InterPro" id="IPR010574">
    <property type="entry name" value="Ala_export_AlaE"/>
</dbReference>
<dbReference type="Pfam" id="PF06610">
    <property type="entry name" value="AlaE"/>
    <property type="match status" value="1"/>
</dbReference>
<sequence length="149" mass="16416">MSRKGPFSIRNAAADTFAMVIFCFITGMFIEIFISGMTFEQSLASRMLSIPVNIAIAWPYGVFRDFMLRQGSRVSSMSFIKNVADLTAYVLFQSPVYAAILFTVGASTDQIITAVSSNAAVSCVMGVFYGYFLDACRKAFKVPGYTQRV</sequence>
<evidence type="ECO:0000255" key="1">
    <source>
        <dbReference type="HAMAP-Rule" id="MF_00914"/>
    </source>
</evidence>
<evidence type="ECO:0000305" key="2"/>
<name>ALAE_ALISL</name>
<reference key="1">
    <citation type="journal article" date="2008" name="BMC Genomics">
        <title>The genome sequence of the fish pathogen Aliivibrio salmonicida strain LFI1238 shows extensive evidence of gene decay.</title>
        <authorList>
            <person name="Hjerde E."/>
            <person name="Lorentzen M.S."/>
            <person name="Holden M.T."/>
            <person name="Seeger K."/>
            <person name="Paulsen S."/>
            <person name="Bason N."/>
            <person name="Churcher C."/>
            <person name="Harris D."/>
            <person name="Norbertczak H."/>
            <person name="Quail M.A."/>
            <person name="Sanders S."/>
            <person name="Thurston S."/>
            <person name="Parkhill J."/>
            <person name="Willassen N.P."/>
            <person name="Thomson N.R."/>
        </authorList>
    </citation>
    <scope>NUCLEOTIDE SEQUENCE [LARGE SCALE GENOMIC DNA]</scope>
    <source>
        <strain>LFI1238</strain>
    </source>
</reference>
<proteinExistence type="inferred from homology"/>
<organism>
    <name type="scientific">Aliivibrio salmonicida (strain LFI1238)</name>
    <name type="common">Vibrio salmonicida (strain LFI1238)</name>
    <dbReference type="NCBI Taxonomy" id="316275"/>
    <lineage>
        <taxon>Bacteria</taxon>
        <taxon>Pseudomonadati</taxon>
        <taxon>Pseudomonadota</taxon>
        <taxon>Gammaproteobacteria</taxon>
        <taxon>Vibrionales</taxon>
        <taxon>Vibrionaceae</taxon>
        <taxon>Aliivibrio</taxon>
    </lineage>
</organism>
<accession>B6EGL4</accession>